<keyword id="KW-0067">ATP-binding</keyword>
<keyword id="KW-0131">Cell cycle</keyword>
<keyword id="KW-0132">Cell division</keyword>
<keyword id="KW-0133">Cell shape</keyword>
<keyword id="KW-0961">Cell wall biogenesis/degradation</keyword>
<keyword id="KW-0963">Cytoplasm</keyword>
<keyword id="KW-0436">Ligase</keyword>
<keyword id="KW-0547">Nucleotide-binding</keyword>
<keyword id="KW-0573">Peptidoglycan synthesis</keyword>
<keyword id="KW-1185">Reference proteome</keyword>
<protein>
    <recommendedName>
        <fullName evidence="1">UDP-N-acetylmuramate--L-alanine ligase</fullName>
        <ecNumber evidence="1">6.3.2.8</ecNumber>
    </recommendedName>
    <alternativeName>
        <fullName evidence="1">UDP-N-acetylmuramoyl-L-alanine synthetase</fullName>
    </alternativeName>
</protein>
<gene>
    <name evidence="1" type="primary">murC</name>
    <name type="ordered locus">Jann_2759</name>
</gene>
<feature type="chain" id="PRO_0000242562" description="UDP-N-acetylmuramate--L-alanine ligase">
    <location>
        <begin position="1"/>
        <end position="474"/>
    </location>
</feature>
<feature type="binding site" evidence="1">
    <location>
        <begin position="119"/>
        <end position="125"/>
    </location>
    <ligand>
        <name>ATP</name>
        <dbReference type="ChEBI" id="CHEBI:30616"/>
    </ligand>
</feature>
<reference key="1">
    <citation type="submission" date="2006-02" db="EMBL/GenBank/DDBJ databases">
        <title>Complete sequence of chromosome of Jannaschia sp. CCS1.</title>
        <authorList>
            <consortium name="US DOE Joint Genome Institute"/>
            <person name="Copeland A."/>
            <person name="Lucas S."/>
            <person name="Lapidus A."/>
            <person name="Barry K."/>
            <person name="Detter J.C."/>
            <person name="Glavina del Rio T."/>
            <person name="Hammon N."/>
            <person name="Israni S."/>
            <person name="Pitluck S."/>
            <person name="Brettin T."/>
            <person name="Bruce D."/>
            <person name="Han C."/>
            <person name="Tapia R."/>
            <person name="Gilna P."/>
            <person name="Chertkov O."/>
            <person name="Saunders E."/>
            <person name="Schmutz J."/>
            <person name="Larimer F."/>
            <person name="Land M."/>
            <person name="Kyrpides N."/>
            <person name="Lykidis A."/>
            <person name="Moran M.A."/>
            <person name="Belas R."/>
            <person name="Ye W."/>
            <person name="Buchan A."/>
            <person name="Gonzalez J.M."/>
            <person name="Schell M.A."/>
            <person name="Richardson P."/>
        </authorList>
    </citation>
    <scope>NUCLEOTIDE SEQUENCE [LARGE SCALE GENOMIC DNA]</scope>
    <source>
        <strain>CCS1</strain>
    </source>
</reference>
<comment type="function">
    <text evidence="1">Cell wall formation.</text>
</comment>
<comment type="catalytic activity">
    <reaction evidence="1">
        <text>UDP-N-acetyl-alpha-D-muramate + L-alanine + ATP = UDP-N-acetyl-alpha-D-muramoyl-L-alanine + ADP + phosphate + H(+)</text>
        <dbReference type="Rhea" id="RHEA:23372"/>
        <dbReference type="ChEBI" id="CHEBI:15378"/>
        <dbReference type="ChEBI" id="CHEBI:30616"/>
        <dbReference type="ChEBI" id="CHEBI:43474"/>
        <dbReference type="ChEBI" id="CHEBI:57972"/>
        <dbReference type="ChEBI" id="CHEBI:70757"/>
        <dbReference type="ChEBI" id="CHEBI:83898"/>
        <dbReference type="ChEBI" id="CHEBI:456216"/>
        <dbReference type="EC" id="6.3.2.8"/>
    </reaction>
</comment>
<comment type="pathway">
    <text evidence="1">Cell wall biogenesis; peptidoglycan biosynthesis.</text>
</comment>
<comment type="subcellular location">
    <subcellularLocation>
        <location evidence="1">Cytoplasm</location>
    </subcellularLocation>
</comment>
<comment type="similarity">
    <text evidence="1">Belongs to the MurCDEF family.</text>
</comment>
<accession>Q28NN6</accession>
<sequence>MNAAATKLPTQLGSIHFVGIGGIGMSGIAEVLLNHGYDVQGSDLKASPITERLERLGARVFVGQQAENLEGAEVVVISSAIKPGNPEYDAARLRGLPIVRRAEMLAELMRLRSNIAVGGTHGKTTTTTMVATLLDHGGVDPTVINGGIIHAYGSNARVGQGDWMVVEADESDGTFNRLPATIAIVTNIDPEHMEHWGTIENLRQGFLDFVSNIPFYGLAVCCTDHPEVQTLVGKITDRRVVTFGFNAQADVRAVNLHYRAGVACFDIALQSEDILIEGCTLPMPGDHNVSNALAAVAVARHLGMKADEIREALDGFKGVNRRFTKVGEVGGITVIDDYGHHPVEIAAVLKAARQASDGRVIAVHQPHRYSRLHSLFDDFCGCFSEADVVAIAEVYAAGEDPIEGASRDDLVAGMIRHGHRHARAILDEDDLERLVREQARPGDMVVCLGAGTISAWANGLPARLSDLDKTAATG</sequence>
<proteinExistence type="inferred from homology"/>
<dbReference type="EC" id="6.3.2.8" evidence="1"/>
<dbReference type="EMBL" id="CP000264">
    <property type="protein sequence ID" value="ABD55676.1"/>
    <property type="molecule type" value="Genomic_DNA"/>
</dbReference>
<dbReference type="RefSeq" id="WP_011455880.1">
    <property type="nucleotide sequence ID" value="NC_007802.1"/>
</dbReference>
<dbReference type="SMR" id="Q28NN6"/>
<dbReference type="STRING" id="290400.Jann_2759"/>
<dbReference type="KEGG" id="jan:Jann_2759"/>
<dbReference type="eggNOG" id="COG0773">
    <property type="taxonomic scope" value="Bacteria"/>
</dbReference>
<dbReference type="HOGENOM" id="CLU_028104_2_2_5"/>
<dbReference type="OrthoDB" id="9804126at2"/>
<dbReference type="UniPathway" id="UPA00219"/>
<dbReference type="Proteomes" id="UP000008326">
    <property type="component" value="Chromosome"/>
</dbReference>
<dbReference type="GO" id="GO:0005737">
    <property type="term" value="C:cytoplasm"/>
    <property type="evidence" value="ECO:0007669"/>
    <property type="project" value="UniProtKB-SubCell"/>
</dbReference>
<dbReference type="GO" id="GO:0005524">
    <property type="term" value="F:ATP binding"/>
    <property type="evidence" value="ECO:0007669"/>
    <property type="project" value="UniProtKB-UniRule"/>
</dbReference>
<dbReference type="GO" id="GO:0008763">
    <property type="term" value="F:UDP-N-acetylmuramate-L-alanine ligase activity"/>
    <property type="evidence" value="ECO:0007669"/>
    <property type="project" value="UniProtKB-UniRule"/>
</dbReference>
<dbReference type="GO" id="GO:0051301">
    <property type="term" value="P:cell division"/>
    <property type="evidence" value="ECO:0007669"/>
    <property type="project" value="UniProtKB-KW"/>
</dbReference>
<dbReference type="GO" id="GO:0071555">
    <property type="term" value="P:cell wall organization"/>
    <property type="evidence" value="ECO:0007669"/>
    <property type="project" value="UniProtKB-KW"/>
</dbReference>
<dbReference type="GO" id="GO:0009252">
    <property type="term" value="P:peptidoglycan biosynthetic process"/>
    <property type="evidence" value="ECO:0007669"/>
    <property type="project" value="UniProtKB-UniRule"/>
</dbReference>
<dbReference type="GO" id="GO:0008360">
    <property type="term" value="P:regulation of cell shape"/>
    <property type="evidence" value="ECO:0007669"/>
    <property type="project" value="UniProtKB-KW"/>
</dbReference>
<dbReference type="Gene3D" id="3.90.190.20">
    <property type="entry name" value="Mur ligase, C-terminal domain"/>
    <property type="match status" value="1"/>
</dbReference>
<dbReference type="Gene3D" id="3.40.1190.10">
    <property type="entry name" value="Mur-like, catalytic domain"/>
    <property type="match status" value="1"/>
</dbReference>
<dbReference type="Gene3D" id="3.40.50.720">
    <property type="entry name" value="NAD(P)-binding Rossmann-like Domain"/>
    <property type="match status" value="1"/>
</dbReference>
<dbReference type="HAMAP" id="MF_00046">
    <property type="entry name" value="MurC"/>
    <property type="match status" value="1"/>
</dbReference>
<dbReference type="InterPro" id="IPR036565">
    <property type="entry name" value="Mur-like_cat_sf"/>
</dbReference>
<dbReference type="InterPro" id="IPR004101">
    <property type="entry name" value="Mur_ligase_C"/>
</dbReference>
<dbReference type="InterPro" id="IPR036615">
    <property type="entry name" value="Mur_ligase_C_dom_sf"/>
</dbReference>
<dbReference type="InterPro" id="IPR013221">
    <property type="entry name" value="Mur_ligase_cen"/>
</dbReference>
<dbReference type="InterPro" id="IPR000713">
    <property type="entry name" value="Mur_ligase_N"/>
</dbReference>
<dbReference type="InterPro" id="IPR050061">
    <property type="entry name" value="MurCDEF_pg_biosynth"/>
</dbReference>
<dbReference type="InterPro" id="IPR005758">
    <property type="entry name" value="UDP-N-AcMur_Ala_ligase_MurC"/>
</dbReference>
<dbReference type="NCBIfam" id="TIGR01082">
    <property type="entry name" value="murC"/>
    <property type="match status" value="1"/>
</dbReference>
<dbReference type="PANTHER" id="PTHR43445:SF3">
    <property type="entry name" value="UDP-N-ACETYLMURAMATE--L-ALANINE LIGASE"/>
    <property type="match status" value="1"/>
</dbReference>
<dbReference type="PANTHER" id="PTHR43445">
    <property type="entry name" value="UDP-N-ACETYLMURAMATE--L-ALANINE LIGASE-RELATED"/>
    <property type="match status" value="1"/>
</dbReference>
<dbReference type="Pfam" id="PF01225">
    <property type="entry name" value="Mur_ligase"/>
    <property type="match status" value="1"/>
</dbReference>
<dbReference type="Pfam" id="PF02875">
    <property type="entry name" value="Mur_ligase_C"/>
    <property type="match status" value="1"/>
</dbReference>
<dbReference type="Pfam" id="PF08245">
    <property type="entry name" value="Mur_ligase_M"/>
    <property type="match status" value="1"/>
</dbReference>
<dbReference type="SUPFAM" id="SSF51984">
    <property type="entry name" value="MurCD N-terminal domain"/>
    <property type="match status" value="1"/>
</dbReference>
<dbReference type="SUPFAM" id="SSF53623">
    <property type="entry name" value="MurD-like peptide ligases, catalytic domain"/>
    <property type="match status" value="1"/>
</dbReference>
<dbReference type="SUPFAM" id="SSF53244">
    <property type="entry name" value="MurD-like peptide ligases, peptide-binding domain"/>
    <property type="match status" value="1"/>
</dbReference>
<evidence type="ECO:0000255" key="1">
    <source>
        <dbReference type="HAMAP-Rule" id="MF_00046"/>
    </source>
</evidence>
<organism>
    <name type="scientific">Jannaschia sp. (strain CCS1)</name>
    <dbReference type="NCBI Taxonomy" id="290400"/>
    <lineage>
        <taxon>Bacteria</taxon>
        <taxon>Pseudomonadati</taxon>
        <taxon>Pseudomonadota</taxon>
        <taxon>Alphaproteobacteria</taxon>
        <taxon>Rhodobacterales</taxon>
        <taxon>Roseobacteraceae</taxon>
        <taxon>Jannaschia</taxon>
    </lineage>
</organism>
<name>MURC_JANSC</name>